<dbReference type="EMBL" id="Z38125">
    <property type="protein sequence ID" value="CAA86280.1"/>
    <property type="molecule type" value="Genomic_DNA"/>
</dbReference>
<dbReference type="PIR" id="S48472">
    <property type="entry name" value="S48472"/>
</dbReference>
<dbReference type="PaxDb" id="4932-YIL100C-A"/>
<dbReference type="EnsemblFungi" id="YIL100C-A_mRNA">
    <property type="protein sequence ID" value="YIL100C-A"/>
    <property type="gene ID" value="YIL100C-A"/>
</dbReference>
<dbReference type="AGR" id="SGD:S000028794"/>
<dbReference type="SGD" id="S000028794">
    <property type="gene designation" value="YIL100C-A"/>
</dbReference>
<dbReference type="HOGENOM" id="CLU_2147830_0_0_1"/>
<dbReference type="GO" id="GO:0016020">
    <property type="term" value="C:membrane"/>
    <property type="evidence" value="ECO:0007669"/>
    <property type="project" value="UniProtKB-SubCell"/>
</dbReference>
<gene>
    <name type="ordered locus">YIL100C-A</name>
</gene>
<name>YI100_YEAST</name>
<proteinExistence type="uncertain"/>
<organism>
    <name type="scientific">Saccharomyces cerevisiae (strain ATCC 204508 / S288c)</name>
    <name type="common">Baker's yeast</name>
    <dbReference type="NCBI Taxonomy" id="559292"/>
    <lineage>
        <taxon>Eukaryota</taxon>
        <taxon>Fungi</taxon>
        <taxon>Dikarya</taxon>
        <taxon>Ascomycota</taxon>
        <taxon>Saccharomycotina</taxon>
        <taxon>Saccharomycetes</taxon>
        <taxon>Saccharomycetales</taxon>
        <taxon>Saccharomycetaceae</taxon>
        <taxon>Saccharomyces</taxon>
    </lineage>
</organism>
<feature type="chain" id="PRO_0000299757" description="Putative uncharacterized protein YIL100C-A">
    <location>
        <begin position="1"/>
        <end position="112"/>
    </location>
</feature>
<feature type="transmembrane region" description="Helical" evidence="1">
    <location>
        <begin position="33"/>
        <end position="53"/>
    </location>
</feature>
<feature type="transmembrane region" description="Helical" evidence="1">
    <location>
        <begin position="58"/>
        <end position="78"/>
    </location>
</feature>
<feature type="transmembrane region" description="Helical" evidence="1">
    <location>
        <begin position="91"/>
        <end position="111"/>
    </location>
</feature>
<protein>
    <recommendedName>
        <fullName>Putative uncharacterized protein YIL100C-A</fullName>
    </recommendedName>
</protein>
<keyword id="KW-0472">Membrane</keyword>
<keyword id="KW-0812">Transmembrane</keyword>
<keyword id="KW-1133">Transmembrane helix</keyword>
<comment type="subcellular location">
    <subcellularLocation>
        <location evidence="2">Membrane</location>
        <topology evidence="2">Multi-pass membrane protein</topology>
    </subcellularLocation>
</comment>
<comment type="miscellaneous">
    <text evidence="2">Completely overlaps YIL100W.</text>
</comment>
<comment type="caution">
    <text evidence="3">Product of a dubious gene prediction unlikely to encode a functional protein. Because of that it is not part of the S.cerevisiae S288c complete/reference proteome set.</text>
</comment>
<accession>Q03884</accession>
<evidence type="ECO:0000255" key="1"/>
<evidence type="ECO:0000305" key="2"/>
<evidence type="ECO:0000305" key="3">
    <source>
    </source>
</evidence>
<reference key="1">
    <citation type="journal article" date="1997" name="Nature">
        <title>The nucleotide sequence of Saccharomyces cerevisiae chromosome IX.</title>
        <authorList>
            <person name="Churcher C.M."/>
            <person name="Bowman S."/>
            <person name="Badcock K."/>
            <person name="Bankier A.T."/>
            <person name="Brown D."/>
            <person name="Chillingworth T."/>
            <person name="Connor R."/>
            <person name="Devlin K."/>
            <person name="Gentles S."/>
            <person name="Hamlin N."/>
            <person name="Harris D.E."/>
            <person name="Horsnell T."/>
            <person name="Hunt S."/>
            <person name="Jagels K."/>
            <person name="Jones M."/>
            <person name="Lye G."/>
            <person name="Moule S."/>
            <person name="Odell C."/>
            <person name="Pearson D."/>
            <person name="Rajandream M.A."/>
            <person name="Rice P."/>
            <person name="Rowley N."/>
            <person name="Skelton J."/>
            <person name="Smith V."/>
            <person name="Walsh S.V."/>
            <person name="Whitehead S."/>
            <person name="Barrell B.G."/>
        </authorList>
    </citation>
    <scope>NUCLEOTIDE SEQUENCE [LARGE SCALE GENOMIC DNA]</scope>
    <source>
        <strain>ATCC 204508 / S288c</strain>
    </source>
</reference>
<reference key="2">
    <citation type="journal article" date="2014" name="G3 (Bethesda)">
        <title>The reference genome sequence of Saccharomyces cerevisiae: Then and now.</title>
        <authorList>
            <person name="Engel S.R."/>
            <person name="Dietrich F.S."/>
            <person name="Fisk D.G."/>
            <person name="Binkley G."/>
            <person name="Balakrishnan R."/>
            <person name="Costanzo M.C."/>
            <person name="Dwight S.S."/>
            <person name="Hitz B.C."/>
            <person name="Karra K."/>
            <person name="Nash R.S."/>
            <person name="Weng S."/>
            <person name="Wong E.D."/>
            <person name="Lloyd P."/>
            <person name="Skrzypek M.S."/>
            <person name="Miyasato S.R."/>
            <person name="Simison M."/>
            <person name="Cherry J.M."/>
        </authorList>
    </citation>
    <scope>GENOME REANNOTATION</scope>
    <source>
        <strain>ATCC 204508 / S288c</strain>
    </source>
</reference>
<sequence>MLRSAPLALGLEPHPLNNSLAFPVFYHIHCYCPSPLLLSLLLHYTVLFSPFGARNHKLYIYIYIYIYIYIYMCINVCTYMNAGPRGVCSLCVYVCTHFNIYIHTYIYLLFVY</sequence>